<gene>
    <name type="primary">nrdI</name>
    <name type="synonym">ymaA</name>
    <name type="ordered locus">BSU17370</name>
</gene>
<organism>
    <name type="scientific">Bacillus subtilis (strain 168)</name>
    <dbReference type="NCBI Taxonomy" id="224308"/>
    <lineage>
        <taxon>Bacteria</taxon>
        <taxon>Bacillati</taxon>
        <taxon>Bacillota</taxon>
        <taxon>Bacilli</taxon>
        <taxon>Bacillales</taxon>
        <taxon>Bacillaceae</taxon>
        <taxon>Bacillus</taxon>
    </lineage>
</organism>
<sequence>MVQIIFDSKTGNVQRFVNKTGFQQIRKVDEMDHVDTPFVLVTYTTNFGQVPASTQSFLEKYAHLLLGVAASGNKVWGDNFAKSADTISRQYQVPILHKFELSGTSKDVELFTQEVERVVTKSSAKMDPVK</sequence>
<feature type="chain" id="PRO_0000164305" description="Protein NrdI">
    <location>
        <begin position="1"/>
        <end position="130"/>
    </location>
</feature>
<feature type="strand" evidence="3">
    <location>
        <begin position="3"/>
        <end position="6"/>
    </location>
</feature>
<feature type="strand" evidence="3">
    <location>
        <begin position="9"/>
        <end position="11"/>
    </location>
</feature>
<feature type="helix" evidence="3">
    <location>
        <begin position="12"/>
        <end position="17"/>
    </location>
</feature>
<feature type="strand" evidence="3">
    <location>
        <begin position="23"/>
        <end position="27"/>
    </location>
</feature>
<feature type="strand" evidence="3">
    <location>
        <begin position="38"/>
        <end position="42"/>
    </location>
</feature>
<feature type="helix" evidence="3">
    <location>
        <begin position="46"/>
        <end position="48"/>
    </location>
</feature>
<feature type="helix" evidence="3">
    <location>
        <begin position="52"/>
        <end position="61"/>
    </location>
</feature>
<feature type="helix" evidence="3">
    <location>
        <begin position="62"/>
        <end position="64"/>
    </location>
</feature>
<feature type="strand" evidence="3">
    <location>
        <begin position="65"/>
        <end position="72"/>
    </location>
</feature>
<feature type="helix" evidence="3">
    <location>
        <begin position="74"/>
        <end position="79"/>
    </location>
</feature>
<feature type="helix" evidence="3">
    <location>
        <begin position="82"/>
        <end position="91"/>
    </location>
</feature>
<feature type="strand" evidence="3">
    <location>
        <begin position="95"/>
        <end position="100"/>
    </location>
</feature>
<feature type="helix" evidence="3">
    <location>
        <begin position="105"/>
        <end position="122"/>
    </location>
</feature>
<feature type="turn" evidence="3">
    <location>
        <begin position="123"/>
        <end position="125"/>
    </location>
</feature>
<protein>
    <recommendedName>
        <fullName>Protein NrdI</fullName>
    </recommendedName>
</protein>
<comment type="function">
    <text>Probably involved in ribonucleotide reductase function.</text>
</comment>
<comment type="induction">
    <text evidence="1">Part of the probable nrdI(ymaA)-nrdE-nrdF-ymaB operon. Expression is constitutive but low, dramatically induced by thymidine starvation which requires recA.</text>
</comment>
<comment type="similarity">
    <text evidence="2">Belongs to the NrdI family.</text>
</comment>
<proteinExistence type="evidence at protein level"/>
<reference key="1">
    <citation type="journal article" date="1996" name="Microbiology">
        <title>The Bacillus subtilis genes for ribonucleotide reductase are similar to the genes for the second class I NrdE/NrdF enzymes of Enterobacteriaceae.</title>
        <authorList>
            <person name="Scotti C."/>
            <person name="Valbuzzi A."/>
            <person name="Perego M."/>
            <person name="Galizzi A."/>
            <person name="Albertini A.M."/>
        </authorList>
    </citation>
    <scope>NUCLEOTIDE SEQUENCE [GENOMIC DNA]</scope>
    <scope>OPERON</scope>
    <source>
        <strain>168</strain>
    </source>
</reference>
<reference key="2">
    <citation type="journal article" date="1997" name="Nature">
        <title>The complete genome sequence of the Gram-positive bacterium Bacillus subtilis.</title>
        <authorList>
            <person name="Kunst F."/>
            <person name="Ogasawara N."/>
            <person name="Moszer I."/>
            <person name="Albertini A.M."/>
            <person name="Alloni G."/>
            <person name="Azevedo V."/>
            <person name="Bertero M.G."/>
            <person name="Bessieres P."/>
            <person name="Bolotin A."/>
            <person name="Borchert S."/>
            <person name="Borriss R."/>
            <person name="Boursier L."/>
            <person name="Brans A."/>
            <person name="Braun M."/>
            <person name="Brignell S.C."/>
            <person name="Bron S."/>
            <person name="Brouillet S."/>
            <person name="Bruschi C.V."/>
            <person name="Caldwell B."/>
            <person name="Capuano V."/>
            <person name="Carter N.M."/>
            <person name="Choi S.-K."/>
            <person name="Codani J.-J."/>
            <person name="Connerton I.F."/>
            <person name="Cummings N.J."/>
            <person name="Daniel R.A."/>
            <person name="Denizot F."/>
            <person name="Devine K.M."/>
            <person name="Duesterhoeft A."/>
            <person name="Ehrlich S.D."/>
            <person name="Emmerson P.T."/>
            <person name="Entian K.-D."/>
            <person name="Errington J."/>
            <person name="Fabret C."/>
            <person name="Ferrari E."/>
            <person name="Foulger D."/>
            <person name="Fritz C."/>
            <person name="Fujita M."/>
            <person name="Fujita Y."/>
            <person name="Fuma S."/>
            <person name="Galizzi A."/>
            <person name="Galleron N."/>
            <person name="Ghim S.-Y."/>
            <person name="Glaser P."/>
            <person name="Goffeau A."/>
            <person name="Golightly E.J."/>
            <person name="Grandi G."/>
            <person name="Guiseppi G."/>
            <person name="Guy B.J."/>
            <person name="Haga K."/>
            <person name="Haiech J."/>
            <person name="Harwood C.R."/>
            <person name="Henaut A."/>
            <person name="Hilbert H."/>
            <person name="Holsappel S."/>
            <person name="Hosono S."/>
            <person name="Hullo M.-F."/>
            <person name="Itaya M."/>
            <person name="Jones L.-M."/>
            <person name="Joris B."/>
            <person name="Karamata D."/>
            <person name="Kasahara Y."/>
            <person name="Klaerr-Blanchard M."/>
            <person name="Klein C."/>
            <person name="Kobayashi Y."/>
            <person name="Koetter P."/>
            <person name="Koningstein G."/>
            <person name="Krogh S."/>
            <person name="Kumano M."/>
            <person name="Kurita K."/>
            <person name="Lapidus A."/>
            <person name="Lardinois S."/>
            <person name="Lauber J."/>
            <person name="Lazarevic V."/>
            <person name="Lee S.-M."/>
            <person name="Levine A."/>
            <person name="Liu H."/>
            <person name="Masuda S."/>
            <person name="Mauel C."/>
            <person name="Medigue C."/>
            <person name="Medina N."/>
            <person name="Mellado R.P."/>
            <person name="Mizuno M."/>
            <person name="Moestl D."/>
            <person name="Nakai S."/>
            <person name="Noback M."/>
            <person name="Noone D."/>
            <person name="O'Reilly M."/>
            <person name="Ogawa K."/>
            <person name="Ogiwara A."/>
            <person name="Oudega B."/>
            <person name="Park S.-H."/>
            <person name="Parro V."/>
            <person name="Pohl T.M."/>
            <person name="Portetelle D."/>
            <person name="Porwollik S."/>
            <person name="Prescott A.M."/>
            <person name="Presecan E."/>
            <person name="Pujic P."/>
            <person name="Purnelle B."/>
            <person name="Rapoport G."/>
            <person name="Rey M."/>
            <person name="Reynolds S."/>
            <person name="Rieger M."/>
            <person name="Rivolta C."/>
            <person name="Rocha E."/>
            <person name="Roche B."/>
            <person name="Rose M."/>
            <person name="Sadaie Y."/>
            <person name="Sato T."/>
            <person name="Scanlan E."/>
            <person name="Schleich S."/>
            <person name="Schroeter R."/>
            <person name="Scoffone F."/>
            <person name="Sekiguchi J."/>
            <person name="Sekowska A."/>
            <person name="Seror S.J."/>
            <person name="Serror P."/>
            <person name="Shin B.-S."/>
            <person name="Soldo B."/>
            <person name="Sorokin A."/>
            <person name="Tacconi E."/>
            <person name="Takagi T."/>
            <person name="Takahashi H."/>
            <person name="Takemaru K."/>
            <person name="Takeuchi M."/>
            <person name="Tamakoshi A."/>
            <person name="Tanaka T."/>
            <person name="Terpstra P."/>
            <person name="Tognoni A."/>
            <person name="Tosato V."/>
            <person name="Uchiyama S."/>
            <person name="Vandenbol M."/>
            <person name="Vannier F."/>
            <person name="Vassarotti A."/>
            <person name="Viari A."/>
            <person name="Wambutt R."/>
            <person name="Wedler E."/>
            <person name="Wedler H."/>
            <person name="Weitzenegger T."/>
            <person name="Winters P."/>
            <person name="Wipat A."/>
            <person name="Yamamoto H."/>
            <person name="Yamane K."/>
            <person name="Yasumoto K."/>
            <person name="Yata K."/>
            <person name="Yoshida K."/>
            <person name="Yoshikawa H.-F."/>
            <person name="Zumstein E."/>
            <person name="Yoshikawa H."/>
            <person name="Danchin A."/>
        </authorList>
    </citation>
    <scope>NUCLEOTIDE SEQUENCE [LARGE SCALE GENOMIC DNA]</scope>
    <source>
        <strain>168</strain>
    </source>
</reference>
<dbReference type="EMBL" id="Z68500">
    <property type="protein sequence ID" value="CAA92809.1"/>
    <property type="molecule type" value="Genomic_DNA"/>
</dbReference>
<dbReference type="EMBL" id="AL009126">
    <property type="protein sequence ID" value="CAB13621.1"/>
    <property type="molecule type" value="Genomic_DNA"/>
</dbReference>
<dbReference type="PIR" id="C69883">
    <property type="entry name" value="C69883"/>
</dbReference>
<dbReference type="RefSeq" id="NP_389619.1">
    <property type="nucleotide sequence ID" value="NC_000964.3"/>
</dbReference>
<dbReference type="RefSeq" id="WP_003231758.1">
    <property type="nucleotide sequence ID" value="NZ_OZ025638.1"/>
</dbReference>
<dbReference type="PDB" id="1RLJ">
    <property type="method" value="X-ray"/>
    <property type="resolution" value="2.00 A"/>
    <property type="chains" value="A=1-130"/>
</dbReference>
<dbReference type="PDBsum" id="1RLJ"/>
<dbReference type="SMR" id="P50618"/>
<dbReference type="FunCoup" id="P50618">
    <property type="interactions" value="49"/>
</dbReference>
<dbReference type="STRING" id="224308.BSU17370"/>
<dbReference type="DrugBank" id="DB03247">
    <property type="generic name" value="Flavin mononucleotide"/>
</dbReference>
<dbReference type="PaxDb" id="224308-BSU17370"/>
<dbReference type="DNASU" id="940075"/>
<dbReference type="EnsemblBacteria" id="CAB13621">
    <property type="protein sequence ID" value="CAB13621"/>
    <property type="gene ID" value="BSU_17370"/>
</dbReference>
<dbReference type="GeneID" id="940075"/>
<dbReference type="KEGG" id="bsu:BSU17370"/>
<dbReference type="PATRIC" id="fig|224308.179.peg.1883"/>
<dbReference type="eggNOG" id="COG1780">
    <property type="taxonomic scope" value="Bacteria"/>
</dbReference>
<dbReference type="InParanoid" id="P50618"/>
<dbReference type="OrthoDB" id="350535at2"/>
<dbReference type="PhylomeDB" id="P50618"/>
<dbReference type="BioCyc" id="BSUB:BSU17370-MONOMER"/>
<dbReference type="EvolutionaryTrace" id="P50618"/>
<dbReference type="Proteomes" id="UP000001570">
    <property type="component" value="Chromosome"/>
</dbReference>
<dbReference type="GO" id="GO:0010181">
    <property type="term" value="F:FMN binding"/>
    <property type="evidence" value="ECO:0000318"/>
    <property type="project" value="GO_Central"/>
</dbReference>
<dbReference type="GO" id="GO:0036211">
    <property type="term" value="P:protein modification process"/>
    <property type="evidence" value="ECO:0007669"/>
    <property type="project" value="InterPro"/>
</dbReference>
<dbReference type="FunFam" id="3.40.50.360:FF:000053">
    <property type="entry name" value="Protein NrdI"/>
    <property type="match status" value="1"/>
</dbReference>
<dbReference type="Gene3D" id="3.40.50.360">
    <property type="match status" value="1"/>
</dbReference>
<dbReference type="HAMAP" id="MF_00128">
    <property type="entry name" value="NrdI"/>
    <property type="match status" value="1"/>
</dbReference>
<dbReference type="InterPro" id="IPR029039">
    <property type="entry name" value="Flavoprotein-like_sf"/>
</dbReference>
<dbReference type="InterPro" id="IPR020852">
    <property type="entry name" value="RNR_Ib_NrdI_bac"/>
</dbReference>
<dbReference type="InterPro" id="IPR004465">
    <property type="entry name" value="RNR_NrdI"/>
</dbReference>
<dbReference type="NCBIfam" id="TIGR00333">
    <property type="entry name" value="nrdI"/>
    <property type="match status" value="1"/>
</dbReference>
<dbReference type="PANTHER" id="PTHR37297">
    <property type="entry name" value="PROTEIN NRDI"/>
    <property type="match status" value="1"/>
</dbReference>
<dbReference type="PANTHER" id="PTHR37297:SF1">
    <property type="entry name" value="PROTEIN NRDI"/>
    <property type="match status" value="1"/>
</dbReference>
<dbReference type="Pfam" id="PF07972">
    <property type="entry name" value="Flavodoxin_NdrI"/>
    <property type="match status" value="1"/>
</dbReference>
<dbReference type="PIRSF" id="PIRSF005087">
    <property type="entry name" value="NrdI"/>
    <property type="match status" value="1"/>
</dbReference>
<dbReference type="SUPFAM" id="SSF52218">
    <property type="entry name" value="Flavoproteins"/>
    <property type="match status" value="1"/>
</dbReference>
<accession>P50618</accession>
<evidence type="ECO:0000269" key="1">
    <source>
    </source>
</evidence>
<evidence type="ECO:0000305" key="2"/>
<evidence type="ECO:0007829" key="3">
    <source>
        <dbReference type="PDB" id="1RLJ"/>
    </source>
</evidence>
<keyword id="KW-0002">3D-structure</keyword>
<keyword id="KW-1185">Reference proteome</keyword>
<name>NRDI_BACSU</name>